<sequence length="313" mass="34413">MKKKLLAGAITLLSVATLAACSKGSEGADLISMKGDVITEHQFYEQVKSNPSAQQVLLNMTIQKVFEKQYGSELDDKEVDDTIAEEKKQYGENYQRVLSQAGMTLETRKAQIRTSKLVELAVKKVAEAELTDEAYKKAFDEYTPDVTAQIIRLNNEDKAKEVLEKAKAEGADFAQLAKDNSTDEKTKENGGEITFDSASTEVPEQVKKAAFALDVDGVSDVITATGTQAYSSQYYIVKLTKKTEKSSNIDDYKEKLKTVILTQKQNDSTFVQSIIGKELQAANIKVKDQAFQNIFTQYIGGGDSSSSSSTSNE</sequence>
<evidence type="ECO:0000255" key="1">
    <source>
        <dbReference type="HAMAP-Rule" id="MF_01145"/>
    </source>
</evidence>
<proteinExistence type="inferred from homology"/>
<accession>B2IPD4</accession>
<gene>
    <name evidence="1" type="primary">prsA</name>
    <name type="ordered locus">SPCG_0956</name>
</gene>
<reference key="1">
    <citation type="journal article" date="2009" name="BMC Genomics">
        <title>Genome evolution driven by host adaptations results in a more virulent and antimicrobial-resistant Streptococcus pneumoniae serotype 14.</title>
        <authorList>
            <person name="Ding F."/>
            <person name="Tang P."/>
            <person name="Hsu M.-H."/>
            <person name="Cui P."/>
            <person name="Hu S."/>
            <person name="Yu J."/>
            <person name="Chiu C.-H."/>
        </authorList>
    </citation>
    <scope>NUCLEOTIDE SEQUENCE [LARGE SCALE GENOMIC DNA]</scope>
    <source>
        <strain>CGSP14</strain>
    </source>
</reference>
<protein>
    <recommendedName>
        <fullName evidence="1">Foldase protein PrsA</fullName>
        <ecNumber evidence="1">5.2.1.8</ecNumber>
    </recommendedName>
</protein>
<comment type="function">
    <text evidence="1">Plays a major role in protein secretion by helping the post-translocational extracellular folding of several secreted proteins.</text>
</comment>
<comment type="catalytic activity">
    <reaction evidence="1">
        <text>[protein]-peptidylproline (omega=180) = [protein]-peptidylproline (omega=0)</text>
        <dbReference type="Rhea" id="RHEA:16237"/>
        <dbReference type="Rhea" id="RHEA-COMP:10747"/>
        <dbReference type="Rhea" id="RHEA-COMP:10748"/>
        <dbReference type="ChEBI" id="CHEBI:83833"/>
        <dbReference type="ChEBI" id="CHEBI:83834"/>
        <dbReference type="EC" id="5.2.1.8"/>
    </reaction>
</comment>
<comment type="subcellular location">
    <subcellularLocation>
        <location evidence="1">Cell membrane</location>
        <topology evidence="1">Lipid-anchor</topology>
    </subcellularLocation>
</comment>
<comment type="similarity">
    <text evidence="1">Belongs to the PrsA family.</text>
</comment>
<name>PRSA_STRPS</name>
<dbReference type="EC" id="5.2.1.8" evidence="1"/>
<dbReference type="EMBL" id="CP001033">
    <property type="protein sequence ID" value="ACB90208.1"/>
    <property type="molecule type" value="Genomic_DNA"/>
</dbReference>
<dbReference type="RefSeq" id="WP_000727952.1">
    <property type="nucleotide sequence ID" value="NC_010582.1"/>
</dbReference>
<dbReference type="SMR" id="B2IPD4"/>
<dbReference type="KEGG" id="spw:SPCG_0956"/>
<dbReference type="HOGENOM" id="CLU_034646_6_0_9"/>
<dbReference type="GO" id="GO:0005886">
    <property type="term" value="C:plasma membrane"/>
    <property type="evidence" value="ECO:0007669"/>
    <property type="project" value="UniProtKB-SubCell"/>
</dbReference>
<dbReference type="GO" id="GO:0003755">
    <property type="term" value="F:peptidyl-prolyl cis-trans isomerase activity"/>
    <property type="evidence" value="ECO:0007669"/>
    <property type="project" value="UniProtKB-UniRule"/>
</dbReference>
<dbReference type="GO" id="GO:0006457">
    <property type="term" value="P:protein folding"/>
    <property type="evidence" value="ECO:0007669"/>
    <property type="project" value="UniProtKB-UniRule"/>
</dbReference>
<dbReference type="Gene3D" id="3.10.50.40">
    <property type="match status" value="1"/>
</dbReference>
<dbReference type="HAMAP" id="MF_01145">
    <property type="entry name" value="Foldase_PrsA"/>
    <property type="match status" value="1"/>
</dbReference>
<dbReference type="InterPro" id="IPR023059">
    <property type="entry name" value="Foldase_PrsA"/>
</dbReference>
<dbReference type="InterPro" id="IPR046357">
    <property type="entry name" value="PPIase_dom_sf"/>
</dbReference>
<dbReference type="InterPro" id="IPR000297">
    <property type="entry name" value="PPIase_PpiC"/>
</dbReference>
<dbReference type="InterPro" id="IPR050245">
    <property type="entry name" value="PrsA_foldase"/>
</dbReference>
<dbReference type="InterPro" id="IPR027304">
    <property type="entry name" value="Trigger_fact/SurA_dom_sf"/>
</dbReference>
<dbReference type="NCBIfam" id="NF002361">
    <property type="entry name" value="PRK01326.1"/>
    <property type="match status" value="1"/>
</dbReference>
<dbReference type="PANTHER" id="PTHR47245:SF1">
    <property type="entry name" value="FOLDASE PROTEIN PRSA"/>
    <property type="match status" value="1"/>
</dbReference>
<dbReference type="PANTHER" id="PTHR47245">
    <property type="entry name" value="PEPTIDYLPROLYL ISOMERASE"/>
    <property type="match status" value="1"/>
</dbReference>
<dbReference type="Pfam" id="PF00639">
    <property type="entry name" value="Rotamase"/>
    <property type="match status" value="1"/>
</dbReference>
<dbReference type="SUPFAM" id="SSF54534">
    <property type="entry name" value="FKBP-like"/>
    <property type="match status" value="1"/>
</dbReference>
<dbReference type="SUPFAM" id="SSF109998">
    <property type="entry name" value="Triger factor/SurA peptide-binding domain-like"/>
    <property type="match status" value="1"/>
</dbReference>
<dbReference type="PROSITE" id="PS50198">
    <property type="entry name" value="PPIC_PPIASE_2"/>
    <property type="match status" value="1"/>
</dbReference>
<dbReference type="PROSITE" id="PS51257">
    <property type="entry name" value="PROKAR_LIPOPROTEIN"/>
    <property type="match status" value="1"/>
</dbReference>
<keyword id="KW-1003">Cell membrane</keyword>
<keyword id="KW-0413">Isomerase</keyword>
<keyword id="KW-0449">Lipoprotein</keyword>
<keyword id="KW-0472">Membrane</keyword>
<keyword id="KW-0564">Palmitate</keyword>
<keyword id="KW-0697">Rotamase</keyword>
<keyword id="KW-0732">Signal</keyword>
<feature type="signal peptide" evidence="1">
    <location>
        <begin position="1"/>
        <end position="20"/>
    </location>
</feature>
<feature type="chain" id="PRO_1000137387" description="Foldase protein PrsA">
    <location>
        <begin position="21"/>
        <end position="313"/>
    </location>
</feature>
<feature type="domain" description="PpiC" evidence="1">
    <location>
        <begin position="143"/>
        <end position="241"/>
    </location>
</feature>
<feature type="lipid moiety-binding region" description="N-palmitoyl cysteine" evidence="1">
    <location>
        <position position="21"/>
    </location>
</feature>
<feature type="lipid moiety-binding region" description="S-diacylglycerol cysteine" evidence="1">
    <location>
        <position position="21"/>
    </location>
</feature>
<organism>
    <name type="scientific">Streptococcus pneumoniae (strain CGSP14)</name>
    <dbReference type="NCBI Taxonomy" id="516950"/>
    <lineage>
        <taxon>Bacteria</taxon>
        <taxon>Bacillati</taxon>
        <taxon>Bacillota</taxon>
        <taxon>Bacilli</taxon>
        <taxon>Lactobacillales</taxon>
        <taxon>Streptococcaceae</taxon>
        <taxon>Streptococcus</taxon>
    </lineage>
</organism>